<organism>
    <name type="scientific">Arabidopsis thaliana</name>
    <name type="common">Mouse-ear cress</name>
    <dbReference type="NCBI Taxonomy" id="3702"/>
    <lineage>
        <taxon>Eukaryota</taxon>
        <taxon>Viridiplantae</taxon>
        <taxon>Streptophyta</taxon>
        <taxon>Embryophyta</taxon>
        <taxon>Tracheophyta</taxon>
        <taxon>Spermatophyta</taxon>
        <taxon>Magnoliopsida</taxon>
        <taxon>eudicotyledons</taxon>
        <taxon>Gunneridae</taxon>
        <taxon>Pentapetalae</taxon>
        <taxon>rosids</taxon>
        <taxon>malvids</taxon>
        <taxon>Brassicales</taxon>
        <taxon>Brassicaceae</taxon>
        <taxon>Camelineae</taxon>
        <taxon>Arabidopsis</taxon>
    </lineage>
</organism>
<protein>
    <recommendedName>
        <fullName evidence="5">Transcription factor MYB74</fullName>
    </recommendedName>
    <alternativeName>
        <fullName evidence="5">Myb-related protein 74</fullName>
        <shortName evidence="3">AtMYB74</shortName>
    </alternativeName>
</protein>
<evidence type="ECO:0000255" key="1">
    <source>
        <dbReference type="PROSITE-ProRule" id="PRU00625"/>
    </source>
</evidence>
<evidence type="ECO:0000269" key="2">
    <source>
    </source>
</evidence>
<evidence type="ECO:0000303" key="3">
    <source>
    </source>
</evidence>
<evidence type="ECO:0000303" key="4">
    <source>
    </source>
</evidence>
<evidence type="ECO:0000305" key="5"/>
<evidence type="ECO:0000305" key="6">
    <source>
    </source>
</evidence>
<evidence type="ECO:0000312" key="7">
    <source>
        <dbReference type="Araport" id="AT4G05100"/>
    </source>
</evidence>
<keyword id="KW-0238">DNA-binding</keyword>
<keyword id="KW-0539">Nucleus</keyword>
<keyword id="KW-1185">Reference proteome</keyword>
<keyword id="KW-0677">Repeat</keyword>
<keyword id="KW-0346">Stress response</keyword>
<keyword id="KW-0804">Transcription</keyword>
<keyword id="KW-0805">Transcription regulation</keyword>
<feature type="chain" id="PRO_0000439654" description="Transcription factor MYB74">
    <location>
        <begin position="1"/>
        <end position="324"/>
    </location>
</feature>
<feature type="domain" description="HTH myb-type 1" evidence="1">
    <location>
        <begin position="10"/>
        <end position="62"/>
    </location>
</feature>
<feature type="domain" description="HTH myb-type 2" evidence="1">
    <location>
        <begin position="63"/>
        <end position="117"/>
    </location>
</feature>
<feature type="DNA-binding region" description="H-T-H motif" evidence="1">
    <location>
        <begin position="38"/>
        <end position="62"/>
    </location>
</feature>
<feature type="DNA-binding region" description="H-T-H motif" evidence="1">
    <location>
        <begin position="90"/>
        <end position="113"/>
    </location>
</feature>
<feature type="sequence conflict" description="In Ref. 5; AAC83629." evidence="5" ref="5">
    <original>S</original>
    <variation>G</variation>
    <location>
        <position position="84"/>
    </location>
</feature>
<feature type="sequence conflict" description="In Ref. 1; AAS10073." evidence="5" ref="1">
    <original>L</original>
    <variation>F</variation>
    <location>
        <position position="273"/>
    </location>
</feature>
<sequence>MGRSPCCEKKNGLKKGPWTPEEDQKLIDYINIHGYGNWRTLPKNAGLQRCGKSCRLRWTNYLRPDIKRGRFSFEEEETIIQLHSIMGNKWSAIAARLPGRTDNEIKNYWNTHIRKRLLKMGIDPVTHTPRLDLLDISSILSSSIYNSSHHHHHHHQQHMNMSRLMMSDGNHQPLVNPEILKLATSLFSNQNHPNNTHENNTVNQTEVNQYQTGYNMPGNEELQSWFPIMDQFTNFQDLMPMKTTVQNSLSYDDDCSKSNFVLEPYYSDFASVLTTPSSSPTPLNSSSSTYINSSTCSTEDEKESYYSDNITNYSFDVNGFLQFQ</sequence>
<name>MYB74_ARATH</name>
<proteinExistence type="evidence at transcript level"/>
<gene>
    <name evidence="4" type="primary">MYB74</name>
    <name evidence="7" type="ordered locus">At4g05100</name>
</gene>
<reference key="1">
    <citation type="submission" date="2004-01" db="EMBL/GenBank/DDBJ databases">
        <title>The MYB transcription factor family in Arabidopsis: a genome-wide cloning and expression pattern analysis.</title>
        <authorList>
            <person name="Qu L."/>
            <person name="Gu H."/>
        </authorList>
    </citation>
    <scope>NUCLEOTIDE SEQUENCE [MRNA]</scope>
</reference>
<reference key="2">
    <citation type="journal article" date="1999" name="Nature">
        <title>Sequence and analysis of chromosome 4 of the plant Arabidopsis thaliana.</title>
        <authorList>
            <person name="Mayer K.F.X."/>
            <person name="Schueller C."/>
            <person name="Wambutt R."/>
            <person name="Murphy G."/>
            <person name="Volckaert G."/>
            <person name="Pohl T."/>
            <person name="Duesterhoeft A."/>
            <person name="Stiekema W."/>
            <person name="Entian K.-D."/>
            <person name="Terryn N."/>
            <person name="Harris B."/>
            <person name="Ansorge W."/>
            <person name="Brandt P."/>
            <person name="Grivell L.A."/>
            <person name="Rieger M."/>
            <person name="Weichselgartner M."/>
            <person name="de Simone V."/>
            <person name="Obermaier B."/>
            <person name="Mache R."/>
            <person name="Mueller M."/>
            <person name="Kreis M."/>
            <person name="Delseny M."/>
            <person name="Puigdomenech P."/>
            <person name="Watson M."/>
            <person name="Schmidtheini T."/>
            <person name="Reichert B."/>
            <person name="Portetelle D."/>
            <person name="Perez-Alonso M."/>
            <person name="Boutry M."/>
            <person name="Bancroft I."/>
            <person name="Vos P."/>
            <person name="Hoheisel J."/>
            <person name="Zimmermann W."/>
            <person name="Wedler H."/>
            <person name="Ridley P."/>
            <person name="Langham S.-A."/>
            <person name="McCullagh B."/>
            <person name="Bilham L."/>
            <person name="Robben J."/>
            <person name="van der Schueren J."/>
            <person name="Grymonprez B."/>
            <person name="Chuang Y.-J."/>
            <person name="Vandenbussche F."/>
            <person name="Braeken M."/>
            <person name="Weltjens I."/>
            <person name="Voet M."/>
            <person name="Bastiaens I."/>
            <person name="Aert R."/>
            <person name="Defoor E."/>
            <person name="Weitzenegger T."/>
            <person name="Bothe G."/>
            <person name="Ramsperger U."/>
            <person name="Hilbert H."/>
            <person name="Braun M."/>
            <person name="Holzer E."/>
            <person name="Brandt A."/>
            <person name="Peters S."/>
            <person name="van Staveren M."/>
            <person name="Dirkse W."/>
            <person name="Mooijman P."/>
            <person name="Klein Lankhorst R."/>
            <person name="Rose M."/>
            <person name="Hauf J."/>
            <person name="Koetter P."/>
            <person name="Berneiser S."/>
            <person name="Hempel S."/>
            <person name="Feldpausch M."/>
            <person name="Lamberth S."/>
            <person name="Van den Daele H."/>
            <person name="De Keyser A."/>
            <person name="Buysshaert C."/>
            <person name="Gielen J."/>
            <person name="Villarroel R."/>
            <person name="De Clercq R."/>
            <person name="van Montagu M."/>
            <person name="Rogers J."/>
            <person name="Cronin A."/>
            <person name="Quail M.A."/>
            <person name="Bray-Allen S."/>
            <person name="Clark L."/>
            <person name="Doggett J."/>
            <person name="Hall S."/>
            <person name="Kay M."/>
            <person name="Lennard N."/>
            <person name="McLay K."/>
            <person name="Mayes R."/>
            <person name="Pettett A."/>
            <person name="Rajandream M.A."/>
            <person name="Lyne M."/>
            <person name="Benes V."/>
            <person name="Rechmann S."/>
            <person name="Borkova D."/>
            <person name="Bloecker H."/>
            <person name="Scharfe M."/>
            <person name="Grimm M."/>
            <person name="Loehnert T.-H."/>
            <person name="Dose S."/>
            <person name="de Haan M."/>
            <person name="Maarse A.C."/>
            <person name="Schaefer M."/>
            <person name="Mueller-Auer S."/>
            <person name="Gabel C."/>
            <person name="Fuchs M."/>
            <person name="Fartmann B."/>
            <person name="Granderath K."/>
            <person name="Dauner D."/>
            <person name="Herzl A."/>
            <person name="Neumann S."/>
            <person name="Argiriou A."/>
            <person name="Vitale D."/>
            <person name="Liguori R."/>
            <person name="Piravandi E."/>
            <person name="Massenet O."/>
            <person name="Quigley F."/>
            <person name="Clabauld G."/>
            <person name="Muendlein A."/>
            <person name="Felber R."/>
            <person name="Schnabl S."/>
            <person name="Hiller R."/>
            <person name="Schmidt W."/>
            <person name="Lecharny A."/>
            <person name="Aubourg S."/>
            <person name="Chefdor F."/>
            <person name="Cooke R."/>
            <person name="Berger C."/>
            <person name="Monfort A."/>
            <person name="Casacuberta E."/>
            <person name="Gibbons T."/>
            <person name="Weber N."/>
            <person name="Vandenbol M."/>
            <person name="Bargues M."/>
            <person name="Terol J."/>
            <person name="Torres A."/>
            <person name="Perez-Perez A."/>
            <person name="Purnelle B."/>
            <person name="Bent E."/>
            <person name="Johnson S."/>
            <person name="Tacon D."/>
            <person name="Jesse T."/>
            <person name="Heijnen L."/>
            <person name="Schwarz S."/>
            <person name="Scholler P."/>
            <person name="Heber S."/>
            <person name="Francs P."/>
            <person name="Bielke C."/>
            <person name="Frishman D."/>
            <person name="Haase D."/>
            <person name="Lemcke K."/>
            <person name="Mewes H.-W."/>
            <person name="Stocker S."/>
            <person name="Zaccaria P."/>
            <person name="Bevan M."/>
            <person name="Wilson R.K."/>
            <person name="de la Bastide M."/>
            <person name="Habermann K."/>
            <person name="Parnell L."/>
            <person name="Dedhia N."/>
            <person name="Gnoj L."/>
            <person name="Schutz K."/>
            <person name="Huang E."/>
            <person name="Spiegel L."/>
            <person name="Sekhon M."/>
            <person name="Murray J."/>
            <person name="Sheet P."/>
            <person name="Cordes M."/>
            <person name="Abu-Threideh J."/>
            <person name="Stoneking T."/>
            <person name="Kalicki J."/>
            <person name="Graves T."/>
            <person name="Harmon G."/>
            <person name="Edwards J."/>
            <person name="Latreille P."/>
            <person name="Courtney L."/>
            <person name="Cloud J."/>
            <person name="Abbott A."/>
            <person name="Scott K."/>
            <person name="Johnson D."/>
            <person name="Minx P."/>
            <person name="Bentley D."/>
            <person name="Fulton B."/>
            <person name="Miller N."/>
            <person name="Greco T."/>
            <person name="Kemp K."/>
            <person name="Kramer J."/>
            <person name="Fulton L."/>
            <person name="Mardis E."/>
            <person name="Dante M."/>
            <person name="Pepin K."/>
            <person name="Hillier L.W."/>
            <person name="Nelson J."/>
            <person name="Spieth J."/>
            <person name="Ryan E."/>
            <person name="Andrews S."/>
            <person name="Geisel C."/>
            <person name="Layman D."/>
            <person name="Du H."/>
            <person name="Ali J."/>
            <person name="Berghoff A."/>
            <person name="Jones K."/>
            <person name="Drone K."/>
            <person name="Cotton M."/>
            <person name="Joshu C."/>
            <person name="Antonoiu B."/>
            <person name="Zidanic M."/>
            <person name="Strong C."/>
            <person name="Sun H."/>
            <person name="Lamar B."/>
            <person name="Yordan C."/>
            <person name="Ma P."/>
            <person name="Zhong J."/>
            <person name="Preston R."/>
            <person name="Vil D."/>
            <person name="Shekher M."/>
            <person name="Matero A."/>
            <person name="Shah R."/>
            <person name="Swaby I.K."/>
            <person name="O'Shaughnessy A."/>
            <person name="Rodriguez M."/>
            <person name="Hoffman J."/>
            <person name="Till S."/>
            <person name="Granat S."/>
            <person name="Shohdy N."/>
            <person name="Hasegawa A."/>
            <person name="Hameed A."/>
            <person name="Lodhi M."/>
            <person name="Johnson A."/>
            <person name="Chen E."/>
            <person name="Marra M.A."/>
            <person name="Martienssen R."/>
            <person name="McCombie W.R."/>
        </authorList>
    </citation>
    <scope>NUCLEOTIDE SEQUENCE [LARGE SCALE GENOMIC DNA]</scope>
    <source>
        <strain>cv. Columbia</strain>
    </source>
</reference>
<reference key="3">
    <citation type="journal article" date="2017" name="Plant J.">
        <title>Araport11: a complete reannotation of the Arabidopsis thaliana reference genome.</title>
        <authorList>
            <person name="Cheng C.Y."/>
            <person name="Krishnakumar V."/>
            <person name="Chan A.P."/>
            <person name="Thibaud-Nissen F."/>
            <person name="Schobel S."/>
            <person name="Town C.D."/>
        </authorList>
    </citation>
    <scope>GENOME REANNOTATION</scope>
    <source>
        <strain>cv. Columbia</strain>
    </source>
</reference>
<reference key="4">
    <citation type="journal article" date="2003" name="Science">
        <title>Empirical analysis of transcriptional activity in the Arabidopsis genome.</title>
        <authorList>
            <person name="Yamada K."/>
            <person name="Lim J."/>
            <person name="Dale J.M."/>
            <person name="Chen H."/>
            <person name="Shinn P."/>
            <person name="Palm C.J."/>
            <person name="Southwick A.M."/>
            <person name="Wu H.C."/>
            <person name="Kim C.J."/>
            <person name="Nguyen M."/>
            <person name="Pham P.K."/>
            <person name="Cheuk R.F."/>
            <person name="Karlin-Newmann G."/>
            <person name="Liu S.X."/>
            <person name="Lam B."/>
            <person name="Sakano H."/>
            <person name="Wu T."/>
            <person name="Yu G."/>
            <person name="Miranda M."/>
            <person name="Quach H.L."/>
            <person name="Tripp M."/>
            <person name="Chang C.H."/>
            <person name="Lee J.M."/>
            <person name="Toriumi M.J."/>
            <person name="Chan M.M."/>
            <person name="Tang C.C."/>
            <person name="Onodera C.S."/>
            <person name="Deng J.M."/>
            <person name="Akiyama K."/>
            <person name="Ansari Y."/>
            <person name="Arakawa T."/>
            <person name="Banh J."/>
            <person name="Banno F."/>
            <person name="Bowser L."/>
            <person name="Brooks S.Y."/>
            <person name="Carninci P."/>
            <person name="Chao Q."/>
            <person name="Choy N."/>
            <person name="Enju A."/>
            <person name="Goldsmith A.D."/>
            <person name="Gurjal M."/>
            <person name="Hansen N.F."/>
            <person name="Hayashizaki Y."/>
            <person name="Johnson-Hopson C."/>
            <person name="Hsuan V.W."/>
            <person name="Iida K."/>
            <person name="Karnes M."/>
            <person name="Khan S."/>
            <person name="Koesema E."/>
            <person name="Ishida J."/>
            <person name="Jiang P.X."/>
            <person name="Jones T."/>
            <person name="Kawai J."/>
            <person name="Kamiya A."/>
            <person name="Meyers C."/>
            <person name="Nakajima M."/>
            <person name="Narusaka M."/>
            <person name="Seki M."/>
            <person name="Sakurai T."/>
            <person name="Satou M."/>
            <person name="Tamse R."/>
            <person name="Vaysberg M."/>
            <person name="Wallender E.K."/>
            <person name="Wong C."/>
            <person name="Yamamura Y."/>
            <person name="Yuan S."/>
            <person name="Shinozaki K."/>
            <person name="Davis R.W."/>
            <person name="Theologis A."/>
            <person name="Ecker J.R."/>
        </authorList>
    </citation>
    <scope>NUCLEOTIDE SEQUENCE [LARGE SCALE MRNA]</scope>
    <source>
        <strain>cv. Columbia</strain>
    </source>
</reference>
<reference key="5">
    <citation type="journal article" date="1998" name="Plant J.">
        <title>Towards functional characterisation of the members of the R2R3-MYB gene family from Arabidopsis thaliana.</title>
        <authorList>
            <person name="Kranz H.D."/>
            <person name="Denekamp M."/>
            <person name="Greco R."/>
            <person name="Jin H.-L."/>
            <person name="Leyva A."/>
            <person name="Meissner R.C."/>
            <person name="Petroni K."/>
            <person name="Urzainqui A."/>
            <person name="Bevan M."/>
            <person name="Martin C."/>
            <person name="Smeekens S."/>
            <person name="Tonelli C."/>
            <person name="Paz-Ares J."/>
            <person name="Weisshaar B."/>
        </authorList>
    </citation>
    <scope>NUCLEOTIDE SEQUENCE [MRNA] OF 66-324</scope>
    <source>
        <strain>cv. Columbia</strain>
    </source>
</reference>
<reference key="6">
    <citation type="journal article" date="2015" name="J. Exp. Bot.">
        <title>Salt-induced transcription factor MYB74 is regulated by the RNA-directed DNA methylation pathway in Arabidopsis.</title>
        <authorList>
            <person name="Xu R."/>
            <person name="Wang Y."/>
            <person name="Zheng H."/>
            <person name="Lu W."/>
            <person name="Wu C."/>
            <person name="Huang J."/>
            <person name="Yan K."/>
            <person name="Yang G."/>
            <person name="Zheng C."/>
        </authorList>
    </citation>
    <scope>FUNCTION</scope>
    <scope>SUBCELLULAR LOCATION</scope>
    <scope>TISSUE SPECIFICITY</scope>
    <scope>INDUCTION BY SALT STRESS</scope>
</reference>
<dbReference type="EMBL" id="AY519603">
    <property type="protein sequence ID" value="AAS10073.1"/>
    <property type="molecule type" value="mRNA"/>
</dbReference>
<dbReference type="EMBL" id="AL161502">
    <property type="protein sequence ID" value="CAB81052.1"/>
    <property type="molecule type" value="Genomic_DNA"/>
</dbReference>
<dbReference type="EMBL" id="CP002687">
    <property type="protein sequence ID" value="AEE82479.1"/>
    <property type="molecule type" value="Genomic_DNA"/>
</dbReference>
<dbReference type="EMBL" id="AF386932">
    <property type="protein sequence ID" value="AAK62377.1"/>
    <property type="molecule type" value="mRNA"/>
</dbReference>
<dbReference type="EMBL" id="BT001182">
    <property type="protein sequence ID" value="AAN65069.1"/>
    <property type="molecule type" value="mRNA"/>
</dbReference>
<dbReference type="EMBL" id="AF062907">
    <property type="protein sequence ID" value="AAC83629.1"/>
    <property type="molecule type" value="mRNA"/>
</dbReference>
<dbReference type="PIR" id="B85064">
    <property type="entry name" value="B85064"/>
</dbReference>
<dbReference type="PIR" id="T51679">
    <property type="entry name" value="T51679"/>
</dbReference>
<dbReference type="RefSeq" id="NP_192419.1">
    <property type="nucleotide sequence ID" value="NM_116749.3"/>
</dbReference>
<dbReference type="SMR" id="Q9M0Y5"/>
<dbReference type="IntAct" id="Q9M0Y5">
    <property type="interactions" value="1"/>
</dbReference>
<dbReference type="STRING" id="3702.Q9M0Y5"/>
<dbReference type="PaxDb" id="3702-AT4G05100.1"/>
<dbReference type="EnsemblPlants" id="AT4G05100.1">
    <property type="protein sequence ID" value="AT4G05100.1"/>
    <property type="gene ID" value="AT4G05100"/>
</dbReference>
<dbReference type="GeneID" id="825855"/>
<dbReference type="Gramene" id="AT4G05100.1">
    <property type="protein sequence ID" value="AT4G05100.1"/>
    <property type="gene ID" value="AT4G05100"/>
</dbReference>
<dbReference type="KEGG" id="ath:AT4G05100"/>
<dbReference type="Araport" id="AT4G05100"/>
<dbReference type="TAIR" id="AT4G05100">
    <property type="gene designation" value="MYB74"/>
</dbReference>
<dbReference type="eggNOG" id="KOG0048">
    <property type="taxonomic scope" value="Eukaryota"/>
</dbReference>
<dbReference type="HOGENOM" id="CLU_028567_15_2_1"/>
<dbReference type="InParanoid" id="Q9M0Y5"/>
<dbReference type="OMA" id="FPIMDQF"/>
<dbReference type="PhylomeDB" id="Q9M0Y5"/>
<dbReference type="PRO" id="PR:Q9M0Y5"/>
<dbReference type="Proteomes" id="UP000006548">
    <property type="component" value="Chromosome 4"/>
</dbReference>
<dbReference type="ExpressionAtlas" id="Q9M0Y5">
    <property type="expression patterns" value="baseline and differential"/>
</dbReference>
<dbReference type="GO" id="GO:0005634">
    <property type="term" value="C:nucleus"/>
    <property type="evidence" value="ECO:0007669"/>
    <property type="project" value="UniProtKB-SubCell"/>
</dbReference>
<dbReference type="GO" id="GO:0003700">
    <property type="term" value="F:DNA-binding transcription factor activity"/>
    <property type="evidence" value="ECO:0000250"/>
    <property type="project" value="TAIR"/>
</dbReference>
<dbReference type="GO" id="GO:0000976">
    <property type="term" value="F:transcription cis-regulatory region binding"/>
    <property type="evidence" value="ECO:0000353"/>
    <property type="project" value="TAIR"/>
</dbReference>
<dbReference type="GO" id="GO:0009737">
    <property type="term" value="P:response to abscisic acid"/>
    <property type="evidence" value="ECO:0000270"/>
    <property type="project" value="TAIR"/>
</dbReference>
<dbReference type="CDD" id="cd00167">
    <property type="entry name" value="SANT"/>
    <property type="match status" value="2"/>
</dbReference>
<dbReference type="FunFam" id="1.10.10.60:FF:000001">
    <property type="entry name" value="MYB-related transcription factor"/>
    <property type="match status" value="1"/>
</dbReference>
<dbReference type="FunFam" id="1.10.10.60:FF:000349">
    <property type="entry name" value="Transcription factor MYB39"/>
    <property type="match status" value="1"/>
</dbReference>
<dbReference type="Gene3D" id="1.10.10.60">
    <property type="entry name" value="Homeodomain-like"/>
    <property type="match status" value="2"/>
</dbReference>
<dbReference type="InterPro" id="IPR009057">
    <property type="entry name" value="Homeodomain-like_sf"/>
</dbReference>
<dbReference type="InterPro" id="IPR017930">
    <property type="entry name" value="Myb_dom"/>
</dbReference>
<dbReference type="InterPro" id="IPR015495">
    <property type="entry name" value="Myb_TF_plants"/>
</dbReference>
<dbReference type="InterPro" id="IPR001005">
    <property type="entry name" value="SANT/Myb"/>
</dbReference>
<dbReference type="PANTHER" id="PTHR47994">
    <property type="entry name" value="F14D16.11-RELATED"/>
    <property type="match status" value="1"/>
</dbReference>
<dbReference type="PANTHER" id="PTHR47994:SF5">
    <property type="entry name" value="F14D16.11-RELATED"/>
    <property type="match status" value="1"/>
</dbReference>
<dbReference type="Pfam" id="PF00249">
    <property type="entry name" value="Myb_DNA-binding"/>
    <property type="match status" value="2"/>
</dbReference>
<dbReference type="SMART" id="SM00717">
    <property type="entry name" value="SANT"/>
    <property type="match status" value="2"/>
</dbReference>
<dbReference type="SUPFAM" id="SSF46689">
    <property type="entry name" value="Homeodomain-like"/>
    <property type="match status" value="1"/>
</dbReference>
<dbReference type="PROSITE" id="PS51294">
    <property type="entry name" value="HTH_MYB"/>
    <property type="match status" value="2"/>
</dbReference>
<accession>Q9M0Y5</accession>
<accession>Q6R077</accession>
<accession>Q9ZTC8</accession>
<comment type="function">
    <text evidence="6">Probable transcription factor that may function in salt stress response.</text>
</comment>
<comment type="subcellular location">
    <subcellularLocation>
        <location evidence="1 2">Nucleus</location>
    </subcellularLocation>
</comment>
<comment type="tissue specificity">
    <text evidence="2">Highly expressed in flowers and at lower levels in rosette leaves and cauline leaves. Expressed at low levels in roots, stems and siliques.</text>
</comment>
<comment type="induction">
    <text evidence="2">Induced by salt stress.</text>
</comment>
<comment type="miscellaneous">
    <text evidence="2">Seeds over-expressing MYB74 display hypersensitivity to salt stress during seed germination.</text>
</comment>